<name>PIG21_CLAP2</name>
<gene>
    <name type="ORF">CPUR_05422</name>
</gene>
<comment type="function">
    <text evidence="3 6">MFS-type transporter; part of the ergochrome gene cluster responsible for the typical purple-black color of the ergot sclerotia (Probable). The ergochrome gene cluster produces several ergot pigments including the yellow ergochrome secalonic acid and its derivatives, as well as the red anthraquinones endocrocin and clavorubin (PubMed:28955461).</text>
</comment>
<comment type="subcellular location">
    <subcellularLocation>
        <location evidence="1">Membrane</location>
        <topology evidence="1">Multi-pass membrane protein</topology>
    </subcellularLocation>
</comment>
<comment type="similarity">
    <text evidence="5">Belongs to the major facilitator superfamily. TCR/Tet family.</text>
</comment>
<dbReference type="EMBL" id="CAGA01000032">
    <property type="protein sequence ID" value="CCE31569.1"/>
    <property type="molecule type" value="Genomic_DNA"/>
</dbReference>
<dbReference type="SMR" id="M1WG91"/>
<dbReference type="STRING" id="1111077.M1WG91"/>
<dbReference type="VEuPathDB" id="FungiDB:CPUR_05422"/>
<dbReference type="eggNOG" id="KOG0254">
    <property type="taxonomic scope" value="Eukaryota"/>
</dbReference>
<dbReference type="HOGENOM" id="CLU_000960_22_1_1"/>
<dbReference type="OrthoDB" id="10021397at2759"/>
<dbReference type="PhylomeDB" id="M1WG91"/>
<dbReference type="Proteomes" id="UP000016801">
    <property type="component" value="Unassembled WGS sequence"/>
</dbReference>
<dbReference type="GO" id="GO:0005886">
    <property type="term" value="C:plasma membrane"/>
    <property type="evidence" value="ECO:0007669"/>
    <property type="project" value="TreeGrafter"/>
</dbReference>
<dbReference type="GO" id="GO:0022857">
    <property type="term" value="F:transmembrane transporter activity"/>
    <property type="evidence" value="ECO:0007669"/>
    <property type="project" value="InterPro"/>
</dbReference>
<dbReference type="CDD" id="cd17502">
    <property type="entry name" value="MFS_Azr1_MDR_like"/>
    <property type="match status" value="1"/>
</dbReference>
<dbReference type="FunFam" id="1.20.1250.20:FF:000196">
    <property type="entry name" value="MFS toxin efflux pump (AflT)"/>
    <property type="match status" value="1"/>
</dbReference>
<dbReference type="FunFam" id="1.20.1720.10:FF:000012">
    <property type="entry name" value="MFS toxin efflux pump (AflT)"/>
    <property type="match status" value="1"/>
</dbReference>
<dbReference type="Gene3D" id="1.20.1250.20">
    <property type="entry name" value="MFS general substrate transporter like domains"/>
    <property type="match status" value="1"/>
</dbReference>
<dbReference type="Gene3D" id="1.20.1720.10">
    <property type="entry name" value="Multidrug resistance protein D"/>
    <property type="match status" value="1"/>
</dbReference>
<dbReference type="InterPro" id="IPR011701">
    <property type="entry name" value="MFS"/>
</dbReference>
<dbReference type="InterPro" id="IPR020846">
    <property type="entry name" value="MFS_dom"/>
</dbReference>
<dbReference type="InterPro" id="IPR036259">
    <property type="entry name" value="MFS_trans_sf"/>
</dbReference>
<dbReference type="PANTHER" id="PTHR23501:SF153">
    <property type="entry name" value="AFLATOXIN EFFLUX PUMP, PUTATIVE-RELATED"/>
    <property type="match status" value="1"/>
</dbReference>
<dbReference type="PANTHER" id="PTHR23501">
    <property type="entry name" value="MAJOR FACILITATOR SUPERFAMILY"/>
    <property type="match status" value="1"/>
</dbReference>
<dbReference type="Pfam" id="PF07690">
    <property type="entry name" value="MFS_1"/>
    <property type="match status" value="1"/>
</dbReference>
<dbReference type="PRINTS" id="PR01036">
    <property type="entry name" value="TCRTETB"/>
</dbReference>
<dbReference type="SUPFAM" id="SSF103473">
    <property type="entry name" value="MFS general substrate transporter"/>
    <property type="match status" value="1"/>
</dbReference>
<dbReference type="PROSITE" id="PS50850">
    <property type="entry name" value="MFS"/>
    <property type="match status" value="1"/>
</dbReference>
<sequence>MSAMSAMGKPEHGSATTSDLEHRATESSLEKQDVEAAPPGPVKPVDPSPKQSTLKTTLLLASVFLAMFLVAVDRTIISTAIPSITNDYNSLNDVGWYGSIYLLTCCAFQLLFGKLYAMYSARVVLLVSLVIFLAASALCGAAPNSEAFIVGRAISGVGSAGIFAGNIVAIVHTIPLAKRPKIQGLMGAVMGLATIIGPLIGGAFTTRVTWRWCFYINLPFGGLALVAIFFYFKVPNRSPAADLSLKQKILSLDIPGTILLVPAIVCLLLALQWGGQVYDWNNKYIIVLLTLMAVLFVAFIAVQICLPKTATVPPRLLMHRSVVAGFLTTIAIGSAQYIFVYYIPIWFQTVRGVNAVDSGIQLLPLMISFVVASIVGGLLNQRIGYYTALGIFGSSVMAVGAGLMTTWNLEISQGKVIGYQILFGFGMGLAFQTPNLAVQTVLPRPEVPMGIALMFFGQLLSAAIFVAVGQNILANQLLSRLAGIDGFEHLKSLILSGGVTAVIDAVPEESKHRVLVAYSDALQQVFIVGLAMSCVGVVGTSCMEWKNILKKPAPPAGPPAGAPTESAPVETKAAGHT</sequence>
<organism>
    <name type="scientific">Claviceps purpurea (strain 20.1)</name>
    <name type="common">Ergot fungus</name>
    <name type="synonym">Sphacelia segetum</name>
    <dbReference type="NCBI Taxonomy" id="1111077"/>
    <lineage>
        <taxon>Eukaryota</taxon>
        <taxon>Fungi</taxon>
        <taxon>Dikarya</taxon>
        <taxon>Ascomycota</taxon>
        <taxon>Pezizomycotina</taxon>
        <taxon>Sordariomycetes</taxon>
        <taxon>Hypocreomycetidae</taxon>
        <taxon>Hypocreales</taxon>
        <taxon>Clavicipitaceae</taxon>
        <taxon>Claviceps</taxon>
    </lineage>
</organism>
<keyword id="KW-0472">Membrane</keyword>
<keyword id="KW-1185">Reference proteome</keyword>
<keyword id="KW-0812">Transmembrane</keyword>
<keyword id="KW-1133">Transmembrane helix</keyword>
<keyword id="KW-0813">Transport</keyword>
<proteinExistence type="inferred from homology"/>
<protein>
    <recommendedName>
        <fullName evidence="4">MFS-type transporter CPUR_05422</fullName>
    </recommendedName>
    <alternativeName>
        <fullName evidence="4">Ergochrome biosynthesis cluster protein CPUR_05422</fullName>
    </alternativeName>
</protein>
<accession>M1WG91</accession>
<evidence type="ECO:0000255" key="1"/>
<evidence type="ECO:0000256" key="2">
    <source>
        <dbReference type="SAM" id="MobiDB-lite"/>
    </source>
</evidence>
<evidence type="ECO:0000269" key="3">
    <source>
    </source>
</evidence>
<evidence type="ECO:0000303" key="4">
    <source>
    </source>
</evidence>
<evidence type="ECO:0000305" key="5"/>
<evidence type="ECO:0000305" key="6">
    <source>
    </source>
</evidence>
<feature type="chain" id="PRO_0000453502" description="MFS-type transporter CPUR_05422">
    <location>
        <begin position="1"/>
        <end position="577"/>
    </location>
</feature>
<feature type="transmembrane region" description="Helical" evidence="1">
    <location>
        <begin position="52"/>
        <end position="72"/>
    </location>
</feature>
<feature type="transmembrane region" description="Helical" evidence="1">
    <location>
        <begin position="93"/>
        <end position="113"/>
    </location>
</feature>
<feature type="transmembrane region" description="Helical" evidence="1">
    <location>
        <begin position="123"/>
        <end position="143"/>
    </location>
</feature>
<feature type="transmembrane region" description="Helical" evidence="1">
    <location>
        <begin position="157"/>
        <end position="177"/>
    </location>
</feature>
<feature type="transmembrane region" description="Helical" evidence="1">
    <location>
        <begin position="184"/>
        <end position="204"/>
    </location>
</feature>
<feature type="transmembrane region" description="Helical" evidence="1">
    <location>
        <begin position="212"/>
        <end position="232"/>
    </location>
</feature>
<feature type="transmembrane region" description="Helical" evidence="1">
    <location>
        <begin position="249"/>
        <end position="269"/>
    </location>
</feature>
<feature type="transmembrane region" description="Helical" evidence="1">
    <location>
        <begin position="285"/>
        <end position="305"/>
    </location>
</feature>
<feature type="transmembrane region" description="Helical" evidence="1">
    <location>
        <begin position="326"/>
        <end position="346"/>
    </location>
</feature>
<feature type="transmembrane region" description="Helical" evidence="1">
    <location>
        <begin position="359"/>
        <end position="379"/>
    </location>
</feature>
<feature type="transmembrane region" description="Helical" evidence="1">
    <location>
        <begin position="383"/>
        <end position="403"/>
    </location>
</feature>
<feature type="transmembrane region" description="Helical" evidence="1">
    <location>
        <begin position="416"/>
        <end position="436"/>
    </location>
</feature>
<feature type="transmembrane region" description="Helical" evidence="1">
    <location>
        <begin position="449"/>
        <end position="469"/>
    </location>
</feature>
<feature type="transmembrane region" description="Helical" evidence="1">
    <location>
        <begin position="525"/>
        <end position="545"/>
    </location>
</feature>
<feature type="region of interest" description="Disordered" evidence="2">
    <location>
        <begin position="1"/>
        <end position="49"/>
    </location>
</feature>
<feature type="region of interest" description="Disordered" evidence="2">
    <location>
        <begin position="554"/>
        <end position="577"/>
    </location>
</feature>
<feature type="compositionally biased region" description="Basic and acidic residues" evidence="2">
    <location>
        <begin position="19"/>
        <end position="34"/>
    </location>
</feature>
<feature type="compositionally biased region" description="Pro residues" evidence="2">
    <location>
        <begin position="38"/>
        <end position="47"/>
    </location>
</feature>
<reference key="1">
    <citation type="journal article" date="2013" name="PLoS Genet.">
        <title>Plant-symbiotic fungi as chemical engineers: Multi-genome analysis of the Clavicipitaceae reveals dynamics of alkaloid loci.</title>
        <authorList>
            <person name="Schardl C.L."/>
            <person name="Young C.A."/>
            <person name="Hesse U."/>
            <person name="Amyotte S.G."/>
            <person name="Andreeva K."/>
            <person name="Calie P.J."/>
            <person name="Fleetwood D.J."/>
            <person name="Haws D.C."/>
            <person name="Moore N."/>
            <person name="Oeser B."/>
            <person name="Panaccione D.G."/>
            <person name="Schweri K.K."/>
            <person name="Voisey C.R."/>
            <person name="Farman M.L."/>
            <person name="Jaromczyk J.W."/>
            <person name="Roe B.A."/>
            <person name="O'Sullivan D.M."/>
            <person name="Scott B."/>
            <person name="Tudzynski P."/>
            <person name="An Z."/>
            <person name="Arnaoudova E.G."/>
            <person name="Bullock C.T."/>
            <person name="Charlton N.D."/>
            <person name="Chen L."/>
            <person name="Cox M."/>
            <person name="Dinkins R.D."/>
            <person name="Florea S."/>
            <person name="Glenn A.E."/>
            <person name="Gordon A."/>
            <person name="Gueldener U."/>
            <person name="Harris D.R."/>
            <person name="Hollin W."/>
            <person name="Jaromczyk J."/>
            <person name="Johnson R.D."/>
            <person name="Khan A.K."/>
            <person name="Leistner E."/>
            <person name="Leuchtmann A."/>
            <person name="Li C."/>
            <person name="Liu J."/>
            <person name="Liu J."/>
            <person name="Liu M."/>
            <person name="Mace W."/>
            <person name="Machado C."/>
            <person name="Nagabhyru P."/>
            <person name="Pan J."/>
            <person name="Schmid J."/>
            <person name="Sugawara K."/>
            <person name="Steiner U."/>
            <person name="Takach J.E."/>
            <person name="Tanaka E."/>
            <person name="Webb J.S."/>
            <person name="Wilson E.V."/>
            <person name="Wiseman J.L."/>
            <person name="Yoshida R."/>
            <person name="Zeng Z."/>
        </authorList>
    </citation>
    <scope>NUCLEOTIDE SEQUENCE [LARGE SCALE GENOMIC DNA]</scope>
    <source>
        <strain>20.1</strain>
    </source>
</reference>
<reference key="2">
    <citation type="journal article" date="2016" name="Fungal Biol. Biotechnol.">
        <title>Identification and characterization of the ergochrome gene cluster in the plant pathogenic fungus Claviceps purpurea.</title>
        <authorList>
            <person name="Neubauer L."/>
            <person name="Dopstadt J."/>
            <person name="Humpf H.U."/>
            <person name="Tudzynski P."/>
        </authorList>
    </citation>
    <scope>FUNCTION</scope>
</reference>
<reference key="3">
    <citation type="journal article" date="2019" name="Chem. Sci.">
        <title>Structure revision of cryptosporioptides and determination of the genetic basis for dimeric xanthone biosynthesis in fungi.</title>
        <authorList>
            <person name="Greco C."/>
            <person name="de Mattos-Shipley K."/>
            <person name="Bailey A.M."/>
            <person name="Mulholland N.P."/>
            <person name="Vincent J.L."/>
            <person name="Willis C.L."/>
            <person name="Cox R.J."/>
            <person name="Simpson T.J."/>
        </authorList>
    </citation>
    <scope>IDENTIFICATION</scope>
    <scope>FUNCTION</scope>
</reference>